<comment type="function">
    <text evidence="1">Catalyzes the sequential NAD-dependent oxidations of L-histidinol to L-histidinaldehyde and then to L-histidine.</text>
</comment>
<comment type="catalytic activity">
    <reaction evidence="1">
        <text>L-histidinol + 2 NAD(+) + H2O = L-histidine + 2 NADH + 3 H(+)</text>
        <dbReference type="Rhea" id="RHEA:20641"/>
        <dbReference type="ChEBI" id="CHEBI:15377"/>
        <dbReference type="ChEBI" id="CHEBI:15378"/>
        <dbReference type="ChEBI" id="CHEBI:57540"/>
        <dbReference type="ChEBI" id="CHEBI:57595"/>
        <dbReference type="ChEBI" id="CHEBI:57699"/>
        <dbReference type="ChEBI" id="CHEBI:57945"/>
        <dbReference type="EC" id="1.1.1.23"/>
    </reaction>
</comment>
<comment type="cofactor">
    <cofactor evidence="1">
        <name>Zn(2+)</name>
        <dbReference type="ChEBI" id="CHEBI:29105"/>
    </cofactor>
    <text evidence="1">Binds 1 zinc ion per subunit.</text>
</comment>
<comment type="pathway">
    <text evidence="1">Amino-acid biosynthesis; L-histidine biosynthesis; L-histidine from 5-phospho-alpha-D-ribose 1-diphosphate: step 9/9.</text>
</comment>
<comment type="similarity">
    <text evidence="1">Belongs to the histidinol dehydrogenase family.</text>
</comment>
<name>HISX_HALMA</name>
<proteinExistence type="inferred from homology"/>
<feature type="chain" id="PRO_0000135891" description="Histidinol dehydrogenase">
    <location>
        <begin position="1"/>
        <end position="422"/>
    </location>
</feature>
<feature type="active site" description="Proton acceptor" evidence="1">
    <location>
        <position position="320"/>
    </location>
</feature>
<feature type="active site" description="Proton acceptor" evidence="1">
    <location>
        <position position="321"/>
    </location>
</feature>
<feature type="binding site" evidence="1">
    <location>
        <position position="123"/>
    </location>
    <ligand>
        <name>NAD(+)</name>
        <dbReference type="ChEBI" id="CHEBI:57540"/>
    </ligand>
</feature>
<feature type="binding site" evidence="1">
    <location>
        <position position="183"/>
    </location>
    <ligand>
        <name>NAD(+)</name>
        <dbReference type="ChEBI" id="CHEBI:57540"/>
    </ligand>
</feature>
<feature type="binding site" evidence="1">
    <location>
        <position position="206"/>
    </location>
    <ligand>
        <name>NAD(+)</name>
        <dbReference type="ChEBI" id="CHEBI:57540"/>
    </ligand>
</feature>
<feature type="binding site" evidence="1">
    <location>
        <position position="229"/>
    </location>
    <ligand>
        <name>substrate</name>
    </ligand>
</feature>
<feature type="binding site" evidence="1">
    <location>
        <position position="251"/>
    </location>
    <ligand>
        <name>substrate</name>
    </ligand>
</feature>
<feature type="binding site" evidence="1">
    <location>
        <position position="251"/>
    </location>
    <ligand>
        <name>Zn(2+)</name>
        <dbReference type="ChEBI" id="CHEBI:29105"/>
    </ligand>
</feature>
<feature type="binding site" evidence="1">
    <location>
        <position position="254"/>
    </location>
    <ligand>
        <name>substrate</name>
    </ligand>
</feature>
<feature type="binding site" evidence="1">
    <location>
        <position position="254"/>
    </location>
    <ligand>
        <name>Zn(2+)</name>
        <dbReference type="ChEBI" id="CHEBI:29105"/>
    </ligand>
</feature>
<feature type="binding site" evidence="1">
    <location>
        <position position="321"/>
    </location>
    <ligand>
        <name>substrate</name>
    </ligand>
</feature>
<feature type="binding site" evidence="1">
    <location>
        <position position="354"/>
    </location>
    <ligand>
        <name>substrate</name>
    </ligand>
</feature>
<feature type="binding site" evidence="1">
    <location>
        <position position="354"/>
    </location>
    <ligand>
        <name>Zn(2+)</name>
        <dbReference type="ChEBI" id="CHEBI:29105"/>
    </ligand>
</feature>
<feature type="binding site" evidence="1">
    <location>
        <position position="408"/>
    </location>
    <ligand>
        <name>substrate</name>
    </ligand>
</feature>
<feature type="binding site" evidence="1">
    <location>
        <position position="413"/>
    </location>
    <ligand>
        <name>substrate</name>
    </ligand>
</feature>
<feature type="binding site" evidence="1">
    <location>
        <position position="413"/>
    </location>
    <ligand>
        <name>Zn(2+)</name>
        <dbReference type="ChEBI" id="CHEBI:29105"/>
    </ligand>
</feature>
<organism>
    <name type="scientific">Haloarcula marismortui (strain ATCC 43049 / DSM 3752 / JCM 8966 / VKM B-1809)</name>
    <name type="common">Halobacterium marismortui</name>
    <dbReference type="NCBI Taxonomy" id="272569"/>
    <lineage>
        <taxon>Archaea</taxon>
        <taxon>Methanobacteriati</taxon>
        <taxon>Methanobacteriota</taxon>
        <taxon>Stenosarchaea group</taxon>
        <taxon>Halobacteria</taxon>
        <taxon>Halobacteriales</taxon>
        <taxon>Haloarculaceae</taxon>
        <taxon>Haloarcula</taxon>
    </lineage>
</organism>
<accession>Q5V574</accession>
<reference key="1">
    <citation type="journal article" date="2004" name="Genome Res.">
        <title>Genome sequence of Haloarcula marismortui: a halophilic archaeon from the Dead Sea.</title>
        <authorList>
            <person name="Baliga N.S."/>
            <person name="Bonneau R."/>
            <person name="Facciotti M.T."/>
            <person name="Pan M."/>
            <person name="Glusman G."/>
            <person name="Deutsch E.W."/>
            <person name="Shannon P."/>
            <person name="Chiu Y."/>
            <person name="Weng R.S."/>
            <person name="Gan R.R."/>
            <person name="Hung P."/>
            <person name="Date S.V."/>
            <person name="Marcotte E."/>
            <person name="Hood L."/>
            <person name="Ng W.V."/>
        </authorList>
    </citation>
    <scope>NUCLEOTIDE SEQUENCE [LARGE SCALE GENOMIC DNA]</scope>
    <source>
        <strain>ATCC 43049 / DSM 3752 / JCM 8966 / VKM B-1809</strain>
    </source>
</reference>
<sequence length="422" mass="44466">MNVRTIADLGPDERAAFFDRDAGVDAVRDDVRDIVSQVHEEGDVALRRFAEEFDDVSVGNIDITDAAERAYEEIDDDVREAIEDAAANIRAFHERQVPEDWRDDFEGRELGRRFRPLDSAGVYAPGGTAAYPSSALMGVIPAKVAGVEHVAVATPPAEEVNPVTLAAIHVAGADAVYQVGGAQAIAALAYGTETVSATDIVVGPGNRWVTAAKAEVRGDVAIDFLAGPSEVMVVADGDADPELVAADLIAQAEHDENASVVAVTDDADLAEQVVDAVDEQADGREREAVIRAALDNDTSGVLLARSMSEAVLFAEEYAAEHLSIQAADDESLLERIPSAGSVFLGPYSPVAAGDYATGTNHVLPTGGNARVTGGLSVDTFVRSTTVQRLSEDSLGDIADTITTLAEAEGLDAHAESVRKRFE</sequence>
<dbReference type="EC" id="1.1.1.23" evidence="1"/>
<dbReference type="EMBL" id="AY596297">
    <property type="protein sequence ID" value="AAV45328.1"/>
    <property type="molecule type" value="Genomic_DNA"/>
</dbReference>
<dbReference type="RefSeq" id="WP_011222927.1">
    <property type="nucleotide sequence ID" value="NC_006396.1"/>
</dbReference>
<dbReference type="SMR" id="Q5V574"/>
<dbReference type="STRING" id="272569.rrnAC0272"/>
<dbReference type="PaxDb" id="272569-rrnAC0272"/>
<dbReference type="EnsemblBacteria" id="AAV45328">
    <property type="protein sequence ID" value="AAV45328"/>
    <property type="gene ID" value="rrnAC0272"/>
</dbReference>
<dbReference type="GeneID" id="40154566"/>
<dbReference type="KEGG" id="hma:rrnAC0272"/>
<dbReference type="PATRIC" id="fig|272569.17.peg.1066"/>
<dbReference type="eggNOG" id="arCOG04352">
    <property type="taxonomic scope" value="Archaea"/>
</dbReference>
<dbReference type="HOGENOM" id="CLU_006732_3_0_2"/>
<dbReference type="UniPathway" id="UPA00031">
    <property type="reaction ID" value="UER00014"/>
</dbReference>
<dbReference type="Proteomes" id="UP000001169">
    <property type="component" value="Chromosome I"/>
</dbReference>
<dbReference type="GO" id="GO:0005737">
    <property type="term" value="C:cytoplasm"/>
    <property type="evidence" value="ECO:0007669"/>
    <property type="project" value="TreeGrafter"/>
</dbReference>
<dbReference type="GO" id="GO:0004399">
    <property type="term" value="F:histidinol dehydrogenase activity"/>
    <property type="evidence" value="ECO:0007669"/>
    <property type="project" value="UniProtKB-UniRule"/>
</dbReference>
<dbReference type="GO" id="GO:0051287">
    <property type="term" value="F:NAD binding"/>
    <property type="evidence" value="ECO:0007669"/>
    <property type="project" value="InterPro"/>
</dbReference>
<dbReference type="GO" id="GO:0008270">
    <property type="term" value="F:zinc ion binding"/>
    <property type="evidence" value="ECO:0007669"/>
    <property type="project" value="UniProtKB-UniRule"/>
</dbReference>
<dbReference type="GO" id="GO:0000105">
    <property type="term" value="P:L-histidine biosynthetic process"/>
    <property type="evidence" value="ECO:0007669"/>
    <property type="project" value="UniProtKB-UniRule"/>
</dbReference>
<dbReference type="CDD" id="cd06572">
    <property type="entry name" value="Histidinol_dh"/>
    <property type="match status" value="1"/>
</dbReference>
<dbReference type="FunFam" id="3.40.50.1980:FF:000001">
    <property type="entry name" value="Histidinol dehydrogenase"/>
    <property type="match status" value="1"/>
</dbReference>
<dbReference type="FunFam" id="3.40.50.1980:FF:000026">
    <property type="entry name" value="Histidinol dehydrogenase"/>
    <property type="match status" value="1"/>
</dbReference>
<dbReference type="Gene3D" id="1.20.5.1300">
    <property type="match status" value="1"/>
</dbReference>
<dbReference type="Gene3D" id="3.40.50.1980">
    <property type="entry name" value="Nitrogenase molybdenum iron protein domain"/>
    <property type="match status" value="2"/>
</dbReference>
<dbReference type="HAMAP" id="MF_01024">
    <property type="entry name" value="HisD"/>
    <property type="match status" value="1"/>
</dbReference>
<dbReference type="InterPro" id="IPR016161">
    <property type="entry name" value="Ald_DH/histidinol_DH"/>
</dbReference>
<dbReference type="InterPro" id="IPR001692">
    <property type="entry name" value="Histidinol_DH_CS"/>
</dbReference>
<dbReference type="InterPro" id="IPR022695">
    <property type="entry name" value="Histidinol_DH_monofunct"/>
</dbReference>
<dbReference type="InterPro" id="IPR012131">
    <property type="entry name" value="Hstdl_DH"/>
</dbReference>
<dbReference type="NCBIfam" id="TIGR00069">
    <property type="entry name" value="hisD"/>
    <property type="match status" value="1"/>
</dbReference>
<dbReference type="PANTHER" id="PTHR21256:SF2">
    <property type="entry name" value="HISTIDINE BIOSYNTHESIS TRIFUNCTIONAL PROTEIN"/>
    <property type="match status" value="1"/>
</dbReference>
<dbReference type="PANTHER" id="PTHR21256">
    <property type="entry name" value="HISTIDINOL DEHYDROGENASE HDH"/>
    <property type="match status" value="1"/>
</dbReference>
<dbReference type="Pfam" id="PF00815">
    <property type="entry name" value="Histidinol_dh"/>
    <property type="match status" value="1"/>
</dbReference>
<dbReference type="PIRSF" id="PIRSF000099">
    <property type="entry name" value="Histidinol_dh"/>
    <property type="match status" value="1"/>
</dbReference>
<dbReference type="PRINTS" id="PR00083">
    <property type="entry name" value="HOLDHDRGNASE"/>
</dbReference>
<dbReference type="SUPFAM" id="SSF53720">
    <property type="entry name" value="ALDH-like"/>
    <property type="match status" value="1"/>
</dbReference>
<dbReference type="PROSITE" id="PS00611">
    <property type="entry name" value="HISOL_DEHYDROGENASE"/>
    <property type="match status" value="1"/>
</dbReference>
<keyword id="KW-0028">Amino-acid biosynthesis</keyword>
<keyword id="KW-0368">Histidine biosynthesis</keyword>
<keyword id="KW-0479">Metal-binding</keyword>
<keyword id="KW-0520">NAD</keyword>
<keyword id="KW-0560">Oxidoreductase</keyword>
<keyword id="KW-1185">Reference proteome</keyword>
<keyword id="KW-0862">Zinc</keyword>
<gene>
    <name evidence="1" type="primary">hisD</name>
    <name type="ordered locus">rrnAC0272</name>
</gene>
<evidence type="ECO:0000255" key="1">
    <source>
        <dbReference type="HAMAP-Rule" id="MF_01024"/>
    </source>
</evidence>
<protein>
    <recommendedName>
        <fullName evidence="1">Histidinol dehydrogenase</fullName>
        <shortName evidence="1">HDH</shortName>
        <ecNumber evidence="1">1.1.1.23</ecNumber>
    </recommendedName>
</protein>